<protein>
    <recommendedName>
        <fullName>Zinc finger protein 25</fullName>
    </recommendedName>
    <alternativeName>
        <fullName>Zinc finger protein KOX19</fullName>
    </alternativeName>
</protein>
<gene>
    <name type="primary">ZNF25</name>
    <name type="synonym">KOX19</name>
</gene>
<feature type="chain" id="PRO_0000047354" description="Zinc finger protein 25">
    <location>
        <begin position="1"/>
        <end position="456"/>
    </location>
</feature>
<feature type="domain" description="KRAB" evidence="2">
    <location>
        <begin position="8"/>
        <end position="79"/>
    </location>
</feature>
<feature type="zinc finger region" description="C2H2-type 1" evidence="1">
    <location>
        <begin position="118"/>
        <end position="140"/>
    </location>
</feature>
<feature type="zinc finger region" description="C2H2-type 2" evidence="1">
    <location>
        <begin position="146"/>
        <end position="168"/>
    </location>
</feature>
<feature type="zinc finger region" description="C2H2-type 3" evidence="1">
    <location>
        <begin position="174"/>
        <end position="196"/>
    </location>
</feature>
<feature type="zinc finger region" description="C2H2-type 4" evidence="1">
    <location>
        <begin position="202"/>
        <end position="224"/>
    </location>
</feature>
<feature type="zinc finger region" description="C2H2-type 5" evidence="1">
    <location>
        <begin position="230"/>
        <end position="252"/>
    </location>
</feature>
<feature type="zinc finger region" description="C2H2-type 6" evidence="1">
    <location>
        <begin position="258"/>
        <end position="280"/>
    </location>
</feature>
<feature type="zinc finger region" description="C2H2-type 7" evidence="1">
    <location>
        <begin position="286"/>
        <end position="308"/>
    </location>
</feature>
<feature type="zinc finger region" description="C2H2-type 8" evidence="1">
    <location>
        <begin position="314"/>
        <end position="336"/>
    </location>
</feature>
<feature type="zinc finger region" description="C2H2-type 9" evidence="1">
    <location>
        <begin position="342"/>
        <end position="364"/>
    </location>
</feature>
<feature type="zinc finger region" description="C2H2-type 10" evidence="1">
    <location>
        <begin position="370"/>
        <end position="392"/>
    </location>
</feature>
<feature type="zinc finger region" description="C2H2-type 11" evidence="1">
    <location>
        <begin position="398"/>
        <end position="420"/>
    </location>
</feature>
<feature type="zinc finger region" description="C2H2-type 12" evidence="1">
    <location>
        <begin position="426"/>
        <end position="448"/>
    </location>
</feature>
<feature type="splice variant" id="VSP_007846" description="In isoform 2." evidence="5">
    <location>
        <begin position="1"/>
        <end position="94"/>
    </location>
</feature>
<feature type="splice variant" id="VSP_007847" description="In isoform 2." evidence="5">
    <original>SQAGN</original>
    <variation>MWNFL</variation>
    <location>
        <begin position="95"/>
        <end position="99"/>
    </location>
</feature>
<feature type="sequence variant" id="VAR_035567" description="In a breast cancer sample; somatic mutation." evidence="4">
    <original>E</original>
    <variation>K</variation>
    <location>
        <position position="21"/>
    </location>
</feature>
<feature type="sequence variant" id="VAR_035568" description="In a breast cancer sample; somatic mutation." evidence="4">
    <original>D</original>
    <variation>G</variation>
    <location>
        <position position="81"/>
    </location>
</feature>
<feature type="sequence variant" id="VAR_052748" description="In dbSNP:rs1208606." evidence="3">
    <original>N</original>
    <variation>K</variation>
    <location>
        <position position="453"/>
    </location>
</feature>
<organism>
    <name type="scientific">Homo sapiens</name>
    <name type="common">Human</name>
    <dbReference type="NCBI Taxonomy" id="9606"/>
    <lineage>
        <taxon>Eukaryota</taxon>
        <taxon>Metazoa</taxon>
        <taxon>Chordata</taxon>
        <taxon>Craniata</taxon>
        <taxon>Vertebrata</taxon>
        <taxon>Euteleostomi</taxon>
        <taxon>Mammalia</taxon>
        <taxon>Eutheria</taxon>
        <taxon>Euarchontoglires</taxon>
        <taxon>Primates</taxon>
        <taxon>Haplorrhini</taxon>
        <taxon>Catarrhini</taxon>
        <taxon>Hominidae</taxon>
        <taxon>Homo</taxon>
    </lineage>
</organism>
<reference key="1">
    <citation type="thesis" date="2000" institute="University of Newcastle" country="United Kingdom">
        <title>Organisation, expression and evolution of Kruppel-type zinc finger genes in human chromosomal region 10p11.2-q11.2.</title>
        <authorList>
            <person name="Hearn T."/>
        </authorList>
    </citation>
    <scope>NUCLEOTIDE SEQUENCE [MRNA] (ISOFORM 1)</scope>
</reference>
<reference key="2">
    <citation type="journal article" date="2004" name="Nat. Genet.">
        <title>Complete sequencing and characterization of 21,243 full-length human cDNAs.</title>
        <authorList>
            <person name="Ota T."/>
            <person name="Suzuki Y."/>
            <person name="Nishikawa T."/>
            <person name="Otsuki T."/>
            <person name="Sugiyama T."/>
            <person name="Irie R."/>
            <person name="Wakamatsu A."/>
            <person name="Hayashi K."/>
            <person name="Sato H."/>
            <person name="Nagai K."/>
            <person name="Kimura K."/>
            <person name="Makita H."/>
            <person name="Sekine M."/>
            <person name="Obayashi M."/>
            <person name="Nishi T."/>
            <person name="Shibahara T."/>
            <person name="Tanaka T."/>
            <person name="Ishii S."/>
            <person name="Yamamoto J."/>
            <person name="Saito K."/>
            <person name="Kawai Y."/>
            <person name="Isono Y."/>
            <person name="Nakamura Y."/>
            <person name="Nagahari K."/>
            <person name="Murakami K."/>
            <person name="Yasuda T."/>
            <person name="Iwayanagi T."/>
            <person name="Wagatsuma M."/>
            <person name="Shiratori A."/>
            <person name="Sudo H."/>
            <person name="Hosoiri T."/>
            <person name="Kaku Y."/>
            <person name="Kodaira H."/>
            <person name="Kondo H."/>
            <person name="Sugawara M."/>
            <person name="Takahashi M."/>
            <person name="Kanda K."/>
            <person name="Yokoi T."/>
            <person name="Furuya T."/>
            <person name="Kikkawa E."/>
            <person name="Omura Y."/>
            <person name="Abe K."/>
            <person name="Kamihara K."/>
            <person name="Katsuta N."/>
            <person name="Sato K."/>
            <person name="Tanikawa M."/>
            <person name="Yamazaki M."/>
            <person name="Ninomiya K."/>
            <person name="Ishibashi T."/>
            <person name="Yamashita H."/>
            <person name="Murakawa K."/>
            <person name="Fujimori K."/>
            <person name="Tanai H."/>
            <person name="Kimata M."/>
            <person name="Watanabe M."/>
            <person name="Hiraoka S."/>
            <person name="Chiba Y."/>
            <person name="Ishida S."/>
            <person name="Ono Y."/>
            <person name="Takiguchi S."/>
            <person name="Watanabe S."/>
            <person name="Yosida M."/>
            <person name="Hotuta T."/>
            <person name="Kusano J."/>
            <person name="Kanehori K."/>
            <person name="Takahashi-Fujii A."/>
            <person name="Hara H."/>
            <person name="Tanase T.-O."/>
            <person name="Nomura Y."/>
            <person name="Togiya S."/>
            <person name="Komai F."/>
            <person name="Hara R."/>
            <person name="Takeuchi K."/>
            <person name="Arita M."/>
            <person name="Imose N."/>
            <person name="Musashino K."/>
            <person name="Yuuki H."/>
            <person name="Oshima A."/>
            <person name="Sasaki N."/>
            <person name="Aotsuka S."/>
            <person name="Yoshikawa Y."/>
            <person name="Matsunawa H."/>
            <person name="Ichihara T."/>
            <person name="Shiohata N."/>
            <person name="Sano S."/>
            <person name="Moriya S."/>
            <person name="Momiyama H."/>
            <person name="Satoh N."/>
            <person name="Takami S."/>
            <person name="Terashima Y."/>
            <person name="Suzuki O."/>
            <person name="Nakagawa S."/>
            <person name="Senoh A."/>
            <person name="Mizoguchi H."/>
            <person name="Goto Y."/>
            <person name="Shimizu F."/>
            <person name="Wakebe H."/>
            <person name="Hishigaki H."/>
            <person name="Watanabe T."/>
            <person name="Sugiyama A."/>
            <person name="Takemoto M."/>
            <person name="Kawakami B."/>
            <person name="Yamazaki M."/>
            <person name="Watanabe K."/>
            <person name="Kumagai A."/>
            <person name="Itakura S."/>
            <person name="Fukuzumi Y."/>
            <person name="Fujimori Y."/>
            <person name="Komiyama M."/>
            <person name="Tashiro H."/>
            <person name="Tanigami A."/>
            <person name="Fujiwara T."/>
            <person name="Ono T."/>
            <person name="Yamada K."/>
            <person name="Fujii Y."/>
            <person name="Ozaki K."/>
            <person name="Hirao M."/>
            <person name="Ohmori Y."/>
            <person name="Kawabata A."/>
            <person name="Hikiji T."/>
            <person name="Kobatake N."/>
            <person name="Inagaki H."/>
            <person name="Ikema Y."/>
            <person name="Okamoto S."/>
            <person name="Okitani R."/>
            <person name="Kawakami T."/>
            <person name="Noguchi S."/>
            <person name="Itoh T."/>
            <person name="Shigeta K."/>
            <person name="Senba T."/>
            <person name="Matsumura K."/>
            <person name="Nakajima Y."/>
            <person name="Mizuno T."/>
            <person name="Morinaga M."/>
            <person name="Sasaki M."/>
            <person name="Togashi T."/>
            <person name="Oyama M."/>
            <person name="Hata H."/>
            <person name="Watanabe M."/>
            <person name="Komatsu T."/>
            <person name="Mizushima-Sugano J."/>
            <person name="Satoh T."/>
            <person name="Shirai Y."/>
            <person name="Takahashi Y."/>
            <person name="Nakagawa K."/>
            <person name="Okumura K."/>
            <person name="Nagase T."/>
            <person name="Nomura N."/>
            <person name="Kikuchi H."/>
            <person name="Masuho Y."/>
            <person name="Yamashita R."/>
            <person name="Nakai K."/>
            <person name="Yada T."/>
            <person name="Nakamura Y."/>
            <person name="Ohara O."/>
            <person name="Isogai T."/>
            <person name="Sugano S."/>
        </authorList>
    </citation>
    <scope>NUCLEOTIDE SEQUENCE [LARGE SCALE MRNA] (ISOFORM 1)</scope>
    <source>
        <tissue>Teratocarcinoma</tissue>
    </source>
</reference>
<reference key="3">
    <citation type="journal article" date="2007" name="BMC Genomics">
        <title>The full-ORF clone resource of the German cDNA consortium.</title>
        <authorList>
            <person name="Bechtel S."/>
            <person name="Rosenfelder H."/>
            <person name="Duda A."/>
            <person name="Schmidt C.P."/>
            <person name="Ernst U."/>
            <person name="Wellenreuther R."/>
            <person name="Mehrle A."/>
            <person name="Schuster C."/>
            <person name="Bahr A."/>
            <person name="Bloecker H."/>
            <person name="Heubner D."/>
            <person name="Hoerlein A."/>
            <person name="Michel G."/>
            <person name="Wedler H."/>
            <person name="Koehrer K."/>
            <person name="Ottenwaelder B."/>
            <person name="Poustka A."/>
            <person name="Wiemann S."/>
            <person name="Schupp I."/>
        </authorList>
    </citation>
    <scope>NUCLEOTIDE SEQUENCE [LARGE SCALE MRNA] (ISOFORM 2)</scope>
    <source>
        <tissue>Hippocampus</tissue>
    </source>
</reference>
<reference key="4">
    <citation type="journal article" date="2004" name="Nature">
        <title>The DNA sequence and comparative analysis of human chromosome 10.</title>
        <authorList>
            <person name="Deloukas P."/>
            <person name="Earthrowl M.E."/>
            <person name="Grafham D.V."/>
            <person name="Rubenfield M."/>
            <person name="French L."/>
            <person name="Steward C.A."/>
            <person name="Sims S.K."/>
            <person name="Jones M.C."/>
            <person name="Searle S."/>
            <person name="Scott C."/>
            <person name="Howe K."/>
            <person name="Hunt S.E."/>
            <person name="Andrews T.D."/>
            <person name="Gilbert J.G.R."/>
            <person name="Swarbreck D."/>
            <person name="Ashurst J.L."/>
            <person name="Taylor A."/>
            <person name="Battles J."/>
            <person name="Bird C.P."/>
            <person name="Ainscough R."/>
            <person name="Almeida J.P."/>
            <person name="Ashwell R.I.S."/>
            <person name="Ambrose K.D."/>
            <person name="Babbage A.K."/>
            <person name="Bagguley C.L."/>
            <person name="Bailey J."/>
            <person name="Banerjee R."/>
            <person name="Bates K."/>
            <person name="Beasley H."/>
            <person name="Bray-Allen S."/>
            <person name="Brown A.J."/>
            <person name="Brown J.Y."/>
            <person name="Burford D.C."/>
            <person name="Burrill W."/>
            <person name="Burton J."/>
            <person name="Cahill P."/>
            <person name="Camire D."/>
            <person name="Carter N.P."/>
            <person name="Chapman J.C."/>
            <person name="Clark S.Y."/>
            <person name="Clarke G."/>
            <person name="Clee C.M."/>
            <person name="Clegg S."/>
            <person name="Corby N."/>
            <person name="Coulson A."/>
            <person name="Dhami P."/>
            <person name="Dutta I."/>
            <person name="Dunn M."/>
            <person name="Faulkner L."/>
            <person name="Frankish A."/>
            <person name="Frankland J.A."/>
            <person name="Garner P."/>
            <person name="Garnett J."/>
            <person name="Gribble S."/>
            <person name="Griffiths C."/>
            <person name="Grocock R."/>
            <person name="Gustafson E."/>
            <person name="Hammond S."/>
            <person name="Harley J.L."/>
            <person name="Hart E."/>
            <person name="Heath P.D."/>
            <person name="Ho T.P."/>
            <person name="Hopkins B."/>
            <person name="Horne J."/>
            <person name="Howden P.J."/>
            <person name="Huckle E."/>
            <person name="Hynds C."/>
            <person name="Johnson C."/>
            <person name="Johnson D."/>
            <person name="Kana A."/>
            <person name="Kay M."/>
            <person name="Kimberley A.M."/>
            <person name="Kershaw J.K."/>
            <person name="Kokkinaki M."/>
            <person name="Laird G.K."/>
            <person name="Lawlor S."/>
            <person name="Lee H.M."/>
            <person name="Leongamornlert D.A."/>
            <person name="Laird G."/>
            <person name="Lloyd C."/>
            <person name="Lloyd D.M."/>
            <person name="Loveland J."/>
            <person name="Lovell J."/>
            <person name="McLaren S."/>
            <person name="McLay K.E."/>
            <person name="McMurray A."/>
            <person name="Mashreghi-Mohammadi M."/>
            <person name="Matthews L."/>
            <person name="Milne S."/>
            <person name="Nickerson T."/>
            <person name="Nguyen M."/>
            <person name="Overton-Larty E."/>
            <person name="Palmer S.A."/>
            <person name="Pearce A.V."/>
            <person name="Peck A.I."/>
            <person name="Pelan S."/>
            <person name="Phillimore B."/>
            <person name="Porter K."/>
            <person name="Rice C.M."/>
            <person name="Rogosin A."/>
            <person name="Ross M.T."/>
            <person name="Sarafidou T."/>
            <person name="Sehra H.K."/>
            <person name="Shownkeen R."/>
            <person name="Skuce C.D."/>
            <person name="Smith M."/>
            <person name="Standring L."/>
            <person name="Sycamore N."/>
            <person name="Tester J."/>
            <person name="Thorpe A."/>
            <person name="Torcasso W."/>
            <person name="Tracey A."/>
            <person name="Tromans A."/>
            <person name="Tsolas J."/>
            <person name="Wall M."/>
            <person name="Walsh J."/>
            <person name="Wang H."/>
            <person name="Weinstock K."/>
            <person name="West A.P."/>
            <person name="Willey D.L."/>
            <person name="Whitehead S.L."/>
            <person name="Wilming L."/>
            <person name="Wray P.W."/>
            <person name="Young L."/>
            <person name="Chen Y."/>
            <person name="Lovering R.C."/>
            <person name="Moschonas N.K."/>
            <person name="Siebert R."/>
            <person name="Fechtel K."/>
            <person name="Bentley D."/>
            <person name="Durbin R.M."/>
            <person name="Hubbard T."/>
            <person name="Doucette-Stamm L."/>
            <person name="Beck S."/>
            <person name="Smith D.R."/>
            <person name="Rogers J."/>
        </authorList>
    </citation>
    <scope>NUCLEOTIDE SEQUENCE [LARGE SCALE GENOMIC DNA]</scope>
</reference>
<reference key="5">
    <citation type="journal article" date="2004" name="Genome Res.">
        <title>The status, quality, and expansion of the NIH full-length cDNA project: the Mammalian Gene Collection (MGC).</title>
        <authorList>
            <consortium name="The MGC Project Team"/>
        </authorList>
    </citation>
    <scope>NUCLEOTIDE SEQUENCE [LARGE SCALE MRNA] OF 6-456 (ISOFORM 1)</scope>
    <scope>VARIANT LYS-453</scope>
    <source>
        <tissue>Testis</tissue>
    </source>
</reference>
<reference key="6">
    <citation type="journal article" date="1990" name="New Biol.">
        <title>Multiple genes encoding zinc finger domains are expressed in human T cells.</title>
        <authorList>
            <person name="Thiesen H.-J."/>
        </authorList>
    </citation>
    <scope>NUCLEOTIDE SEQUENCE [MRNA] OF 230-285</scope>
    <source>
        <tissue>Lymphoid tissue</tissue>
    </source>
</reference>
<reference key="7">
    <citation type="journal article" date="2006" name="Science">
        <title>The consensus coding sequences of human breast and colorectal cancers.</title>
        <authorList>
            <person name="Sjoeblom T."/>
            <person name="Jones S."/>
            <person name="Wood L.D."/>
            <person name="Parsons D.W."/>
            <person name="Lin J."/>
            <person name="Barber T.D."/>
            <person name="Mandelker D."/>
            <person name="Leary R.J."/>
            <person name="Ptak J."/>
            <person name="Silliman N."/>
            <person name="Szabo S."/>
            <person name="Buckhaults P."/>
            <person name="Farrell C."/>
            <person name="Meeh P."/>
            <person name="Markowitz S.D."/>
            <person name="Willis J."/>
            <person name="Dawson D."/>
            <person name="Willson J.K.V."/>
            <person name="Gazdar A.F."/>
            <person name="Hartigan J."/>
            <person name="Wu L."/>
            <person name="Liu C."/>
            <person name="Parmigiani G."/>
            <person name="Park B.H."/>
            <person name="Bachman K.E."/>
            <person name="Papadopoulos N."/>
            <person name="Vogelstein B."/>
            <person name="Kinzler K.W."/>
            <person name="Velculescu V.E."/>
        </authorList>
    </citation>
    <scope>VARIANTS [LARGE SCALE ANALYSIS] LYS-21 AND GLY-81</scope>
</reference>
<evidence type="ECO:0000255" key="1">
    <source>
        <dbReference type="PROSITE-ProRule" id="PRU00042"/>
    </source>
</evidence>
<evidence type="ECO:0000255" key="2">
    <source>
        <dbReference type="PROSITE-ProRule" id="PRU00119"/>
    </source>
</evidence>
<evidence type="ECO:0000269" key="3">
    <source>
    </source>
</evidence>
<evidence type="ECO:0000269" key="4">
    <source>
    </source>
</evidence>
<evidence type="ECO:0000303" key="5">
    <source>
    </source>
</evidence>
<evidence type="ECO:0000305" key="6"/>
<proteinExistence type="evidence at protein level"/>
<comment type="function">
    <text>May be involved in transcriptional regulation.</text>
</comment>
<comment type="interaction">
    <interactant intactId="EBI-7934204">
        <id>P17030</id>
    </interactant>
    <interactant intactId="EBI-12027936">
        <id>Q12765-2</id>
        <label>SCRN1</label>
    </interactant>
    <organismsDiffer>false</organismsDiffer>
    <experiments>3</experiments>
</comment>
<comment type="subcellular location">
    <subcellularLocation>
        <location evidence="6">Nucleus</location>
    </subcellularLocation>
</comment>
<comment type="alternative products">
    <event type="alternative splicing"/>
    <isoform>
        <id>P17030-1</id>
        <name>1</name>
        <sequence type="displayed"/>
    </isoform>
    <isoform>
        <id>P17030-2</id>
        <name>2</name>
        <sequence type="described" ref="VSP_007846 VSP_007847"/>
    </isoform>
</comment>
<comment type="similarity">
    <text evidence="6">Belongs to the krueppel C2H2-type zinc-finger protein family.</text>
</comment>
<comment type="sequence caution" evidence="6">
    <conflict type="erroneous initiation">
        <sequence resource="EMBL-CDS" id="AAH36038"/>
    </conflict>
</comment>
<keyword id="KW-0025">Alternative splicing</keyword>
<keyword id="KW-0238">DNA-binding</keyword>
<keyword id="KW-0479">Metal-binding</keyword>
<keyword id="KW-0539">Nucleus</keyword>
<keyword id="KW-1267">Proteomics identification</keyword>
<keyword id="KW-1185">Reference proteome</keyword>
<keyword id="KW-0677">Repeat</keyword>
<keyword id="KW-0804">Transcription</keyword>
<keyword id="KW-0805">Transcription regulation</keyword>
<keyword id="KW-0862">Zinc</keyword>
<keyword id="KW-0863">Zinc-finger</keyword>
<sequence>MNKFQGPVTLKDVIVEFTKEEWKLLTPAQRTLYKDVMLENYSHLVSVGYHVNKPNAVFKLKQGKEPWILEVEFPHRGFPEDLWSIHDLEARYQESQAGNSRNGELTKHQKTHTTEKACECKECGKFFCQKSALIVHQHTHSKGKSYDCDKCGKSFSKNEDLIRHQKIHTRDKTYECKECKKIFYHLSSLSRHLRTHAGEKPYECNQCEKSFYQKPHLTEHQKTHTGEKPFECTECGKFFYVKAYLMVHQKTHTGEKPYECKECGKAFSQKSHLTVHQRMHTGEKPYKCKECGKFFSRNSHLKTHQRSHTGEKPYECKECRKCFYQKSALTVHQRTHTGEKPFECNKCGKTFYYKSDLTKHQRKHTGEKPYECTECGKSFAVNSVLRLHQRTHTGEKPYACKECGKSFSQKSHFIIHQRKHTGEKPYECQECGETFIQKSQLTAHQKTHTKKRNAEK</sequence>
<accession>P17030</accession>
<accession>A9Z1X5</accession>
<accession>Q8IYE3</accession>
<accession>Q8NDD6</accession>
<accession>Q96MU2</accession>
<name>ZNF25_HUMAN</name>
<dbReference type="EMBL" id="AJ491696">
    <property type="protein sequence ID" value="CAD36955.1"/>
    <property type="molecule type" value="mRNA"/>
</dbReference>
<dbReference type="EMBL" id="AK056452">
    <property type="protein sequence ID" value="BAB71187.1"/>
    <property type="molecule type" value="mRNA"/>
</dbReference>
<dbReference type="EMBL" id="AL834125">
    <property type="protein sequence ID" value="CAD38845.1"/>
    <property type="molecule type" value="mRNA"/>
</dbReference>
<dbReference type="EMBL" id="AL117337">
    <property type="status" value="NOT_ANNOTATED_CDS"/>
    <property type="molecule type" value="Genomic_DNA"/>
</dbReference>
<dbReference type="EMBL" id="BC036038">
    <property type="protein sequence ID" value="AAH36038.1"/>
    <property type="status" value="ALT_INIT"/>
    <property type="molecule type" value="mRNA"/>
</dbReference>
<dbReference type="EMBL" id="X52350">
    <property type="protein sequence ID" value="CAA36576.1"/>
    <property type="molecule type" value="mRNA"/>
</dbReference>
<dbReference type="CCDS" id="CCDS7195.1">
    <molecule id="P17030-1"/>
</dbReference>
<dbReference type="PIR" id="I37958">
    <property type="entry name" value="I37958"/>
</dbReference>
<dbReference type="RefSeq" id="NP_001316579.1">
    <molecule id="P17030-1"/>
    <property type="nucleotide sequence ID" value="NM_001329650.2"/>
</dbReference>
<dbReference type="RefSeq" id="NP_001316580.1">
    <molecule id="P17030-1"/>
    <property type="nucleotide sequence ID" value="NM_001329651.2"/>
</dbReference>
<dbReference type="RefSeq" id="NP_001316581.1">
    <molecule id="P17030-1"/>
    <property type="nucleotide sequence ID" value="NM_001329652.2"/>
</dbReference>
<dbReference type="RefSeq" id="NP_001316582.1">
    <molecule id="P17030-1"/>
    <property type="nucleotide sequence ID" value="NM_001329653.2"/>
</dbReference>
<dbReference type="RefSeq" id="NP_001316583.1">
    <molecule id="P17030-1"/>
    <property type="nucleotide sequence ID" value="NM_001329654.2"/>
</dbReference>
<dbReference type="RefSeq" id="NP_659448.1">
    <molecule id="P17030-1"/>
    <property type="nucleotide sequence ID" value="NM_145011.4"/>
</dbReference>
<dbReference type="SMR" id="P17030"/>
<dbReference type="BioGRID" id="128572">
    <property type="interactions" value="5"/>
</dbReference>
<dbReference type="FunCoup" id="P17030">
    <property type="interactions" value="94"/>
</dbReference>
<dbReference type="IntAct" id="P17030">
    <property type="interactions" value="3"/>
</dbReference>
<dbReference type="MINT" id="P17030"/>
<dbReference type="STRING" id="9606.ENSP00000302222"/>
<dbReference type="GlyCosmos" id="P17030">
    <property type="glycosylation" value="1 site, 2 glycans"/>
</dbReference>
<dbReference type="GlyGen" id="P17030">
    <property type="glycosylation" value="3 sites, 2 O-linked glycans (3 sites)"/>
</dbReference>
<dbReference type="iPTMnet" id="P17030"/>
<dbReference type="PhosphoSitePlus" id="P17030"/>
<dbReference type="BioMuta" id="ZNF25"/>
<dbReference type="DMDM" id="33302620"/>
<dbReference type="jPOST" id="P17030"/>
<dbReference type="MassIVE" id="P17030"/>
<dbReference type="PaxDb" id="9606-ENSP00000302222"/>
<dbReference type="PeptideAtlas" id="P17030"/>
<dbReference type="ProteomicsDB" id="53432">
    <molecule id="P17030-1"/>
</dbReference>
<dbReference type="ProteomicsDB" id="53433">
    <molecule id="P17030-2"/>
</dbReference>
<dbReference type="Antibodypedia" id="13332">
    <property type="antibodies" value="116 antibodies from 22 providers"/>
</dbReference>
<dbReference type="DNASU" id="219749"/>
<dbReference type="Ensembl" id="ENST00000302609.8">
    <molecule id="P17030-1"/>
    <property type="protein sequence ID" value="ENSP00000302222.7"/>
    <property type="gene ID" value="ENSG00000175395.16"/>
</dbReference>
<dbReference type="GeneID" id="219749"/>
<dbReference type="KEGG" id="hsa:219749"/>
<dbReference type="MANE-Select" id="ENST00000302609.8">
    <property type="protein sequence ID" value="ENSP00000302222.7"/>
    <property type="RefSeq nucleotide sequence ID" value="NM_145011.4"/>
    <property type="RefSeq protein sequence ID" value="NP_659448.1"/>
</dbReference>
<dbReference type="UCSC" id="uc001ize.2">
    <molecule id="P17030-1"/>
    <property type="organism name" value="human"/>
</dbReference>
<dbReference type="AGR" id="HGNC:13043"/>
<dbReference type="CTD" id="219749"/>
<dbReference type="GeneCards" id="ZNF25"/>
<dbReference type="HGNC" id="HGNC:13043">
    <property type="gene designation" value="ZNF25"/>
</dbReference>
<dbReference type="HPA" id="ENSG00000175395">
    <property type="expression patterns" value="Low tissue specificity"/>
</dbReference>
<dbReference type="MIM" id="194528">
    <property type="type" value="gene"/>
</dbReference>
<dbReference type="neXtProt" id="NX_P17030"/>
<dbReference type="OpenTargets" id="ENSG00000175395"/>
<dbReference type="PharmGKB" id="PA37621"/>
<dbReference type="VEuPathDB" id="HostDB:ENSG00000175395"/>
<dbReference type="eggNOG" id="KOG1721">
    <property type="taxonomic scope" value="Eukaryota"/>
</dbReference>
<dbReference type="GeneTree" id="ENSGT00940000159981"/>
<dbReference type="HOGENOM" id="CLU_002678_0_5_1"/>
<dbReference type="InParanoid" id="P17030"/>
<dbReference type="OMA" id="YQKPHLT"/>
<dbReference type="OrthoDB" id="1095242at2759"/>
<dbReference type="PAN-GO" id="P17030">
    <property type="GO annotations" value="3 GO annotations based on evolutionary models"/>
</dbReference>
<dbReference type="PhylomeDB" id="P17030"/>
<dbReference type="TreeFam" id="TF337898"/>
<dbReference type="PathwayCommons" id="P17030"/>
<dbReference type="Reactome" id="R-HSA-212436">
    <property type="pathway name" value="Generic Transcription Pathway"/>
</dbReference>
<dbReference type="SignaLink" id="P17030"/>
<dbReference type="BioGRID-ORCS" id="219749">
    <property type="hits" value="10 hits in 1162 CRISPR screens"/>
</dbReference>
<dbReference type="ChiTaRS" id="ZNF25">
    <property type="organism name" value="human"/>
</dbReference>
<dbReference type="GenomeRNAi" id="219749"/>
<dbReference type="Pharos" id="P17030">
    <property type="development level" value="Tdark"/>
</dbReference>
<dbReference type="PRO" id="PR:P17030"/>
<dbReference type="Proteomes" id="UP000005640">
    <property type="component" value="Chromosome 10"/>
</dbReference>
<dbReference type="RNAct" id="P17030">
    <property type="molecule type" value="protein"/>
</dbReference>
<dbReference type="Bgee" id="ENSG00000175395">
    <property type="expression patterns" value="Expressed in endothelial cell and 185 other cell types or tissues"/>
</dbReference>
<dbReference type="GO" id="GO:0005634">
    <property type="term" value="C:nucleus"/>
    <property type="evidence" value="ECO:0000318"/>
    <property type="project" value="GO_Central"/>
</dbReference>
<dbReference type="GO" id="GO:0000981">
    <property type="term" value="F:DNA-binding transcription factor activity, RNA polymerase II-specific"/>
    <property type="evidence" value="ECO:0000318"/>
    <property type="project" value="GO_Central"/>
</dbReference>
<dbReference type="GO" id="GO:0000977">
    <property type="term" value="F:RNA polymerase II transcription regulatory region sequence-specific DNA binding"/>
    <property type="evidence" value="ECO:0000318"/>
    <property type="project" value="GO_Central"/>
</dbReference>
<dbReference type="GO" id="GO:0008270">
    <property type="term" value="F:zinc ion binding"/>
    <property type="evidence" value="ECO:0007669"/>
    <property type="project" value="UniProtKB-KW"/>
</dbReference>
<dbReference type="GO" id="GO:0006357">
    <property type="term" value="P:regulation of transcription by RNA polymerase II"/>
    <property type="evidence" value="ECO:0000318"/>
    <property type="project" value="GO_Central"/>
</dbReference>
<dbReference type="CDD" id="cd07765">
    <property type="entry name" value="KRAB_A-box"/>
    <property type="match status" value="1"/>
</dbReference>
<dbReference type="FunFam" id="3.30.160.60:FF:000139">
    <property type="entry name" value="zinc finger protein 1 homolog"/>
    <property type="match status" value="1"/>
</dbReference>
<dbReference type="FunFam" id="3.30.160.60:FF:000295">
    <property type="entry name" value="zinc finger protein 19"/>
    <property type="match status" value="1"/>
</dbReference>
<dbReference type="FunFam" id="3.30.160.60:FF:001391">
    <property type="entry name" value="Zinc finger protein 25"/>
    <property type="match status" value="1"/>
</dbReference>
<dbReference type="FunFam" id="3.30.160.60:FF:001842">
    <property type="entry name" value="Zinc finger protein 25"/>
    <property type="match status" value="1"/>
</dbReference>
<dbReference type="FunFam" id="3.30.160.60:FF:003177">
    <property type="entry name" value="Zinc finger protein 25"/>
    <property type="match status" value="1"/>
</dbReference>
<dbReference type="FunFam" id="3.30.160.60:FF:000128">
    <property type="entry name" value="zinc finger protein 268 isoform X1"/>
    <property type="match status" value="2"/>
</dbReference>
<dbReference type="FunFam" id="3.30.160.60:FF:002343">
    <property type="entry name" value="Zinc finger protein 33A"/>
    <property type="match status" value="3"/>
</dbReference>
<dbReference type="FunFam" id="3.30.160.60:FF:000338">
    <property type="entry name" value="zinc finger protein 383"/>
    <property type="match status" value="1"/>
</dbReference>
<dbReference type="FunFam" id="3.30.160.60:FF:001498">
    <property type="entry name" value="Zinc finger protein 404"/>
    <property type="match status" value="1"/>
</dbReference>
<dbReference type="Gene3D" id="6.10.140.140">
    <property type="match status" value="1"/>
</dbReference>
<dbReference type="Gene3D" id="3.30.160.60">
    <property type="entry name" value="Classic Zinc Finger"/>
    <property type="match status" value="12"/>
</dbReference>
<dbReference type="InterPro" id="IPR050752">
    <property type="entry name" value="C2H2-ZF_domain"/>
</dbReference>
<dbReference type="InterPro" id="IPR001909">
    <property type="entry name" value="KRAB"/>
</dbReference>
<dbReference type="InterPro" id="IPR036051">
    <property type="entry name" value="KRAB_dom_sf"/>
</dbReference>
<dbReference type="InterPro" id="IPR036236">
    <property type="entry name" value="Znf_C2H2_sf"/>
</dbReference>
<dbReference type="InterPro" id="IPR013087">
    <property type="entry name" value="Znf_C2H2_type"/>
</dbReference>
<dbReference type="PANTHER" id="PTHR24384:SF189">
    <property type="entry name" value="C2H2-TYPE DOMAIN-CONTAINING PROTEIN-RELATED"/>
    <property type="match status" value="1"/>
</dbReference>
<dbReference type="PANTHER" id="PTHR24384">
    <property type="entry name" value="FINGER PUTATIVE TRANSCRIPTION FACTOR FAMILY-RELATED"/>
    <property type="match status" value="1"/>
</dbReference>
<dbReference type="Pfam" id="PF01352">
    <property type="entry name" value="KRAB"/>
    <property type="match status" value="1"/>
</dbReference>
<dbReference type="Pfam" id="PF00096">
    <property type="entry name" value="zf-C2H2"/>
    <property type="match status" value="12"/>
</dbReference>
<dbReference type="SMART" id="SM00349">
    <property type="entry name" value="KRAB"/>
    <property type="match status" value="1"/>
</dbReference>
<dbReference type="SMART" id="SM00355">
    <property type="entry name" value="ZnF_C2H2"/>
    <property type="match status" value="12"/>
</dbReference>
<dbReference type="SUPFAM" id="SSF57667">
    <property type="entry name" value="beta-beta-alpha zinc fingers"/>
    <property type="match status" value="7"/>
</dbReference>
<dbReference type="SUPFAM" id="SSF109640">
    <property type="entry name" value="KRAB domain (Kruppel-associated box)"/>
    <property type="match status" value="1"/>
</dbReference>
<dbReference type="PROSITE" id="PS50805">
    <property type="entry name" value="KRAB"/>
    <property type="match status" value="1"/>
</dbReference>
<dbReference type="PROSITE" id="PS00028">
    <property type="entry name" value="ZINC_FINGER_C2H2_1"/>
    <property type="match status" value="12"/>
</dbReference>
<dbReference type="PROSITE" id="PS50157">
    <property type="entry name" value="ZINC_FINGER_C2H2_2"/>
    <property type="match status" value="12"/>
</dbReference>